<gene>
    <name evidence="1" type="primary">bioC</name>
    <name type="ordered locus">EbC_13400</name>
</gene>
<name>BIOC_ERWBE</name>
<protein>
    <recommendedName>
        <fullName evidence="1">Malonyl-[acyl-carrier protein] O-methyltransferase</fullName>
        <shortName evidence="1">Malonyl-ACP O-methyltransferase</shortName>
        <ecNumber evidence="1">2.1.1.197</ecNumber>
    </recommendedName>
    <alternativeName>
        <fullName evidence="1">Biotin synthesis protein BioC</fullName>
    </alternativeName>
</protein>
<comment type="function">
    <text evidence="1">Converts the free carboxyl group of a malonyl-thioester to its methyl ester by transfer of a methyl group from S-adenosyl-L-methionine (SAM). It allows to synthesize pimeloyl-ACP via the fatty acid synthetic pathway.</text>
</comment>
<comment type="catalytic activity">
    <reaction evidence="1">
        <text>malonyl-[ACP] + S-adenosyl-L-methionine = malonyl-[ACP] methyl ester + S-adenosyl-L-homocysteine</text>
        <dbReference type="Rhea" id="RHEA:17105"/>
        <dbReference type="Rhea" id="RHEA-COMP:9623"/>
        <dbReference type="Rhea" id="RHEA-COMP:9954"/>
        <dbReference type="ChEBI" id="CHEBI:57856"/>
        <dbReference type="ChEBI" id="CHEBI:59789"/>
        <dbReference type="ChEBI" id="CHEBI:78449"/>
        <dbReference type="ChEBI" id="CHEBI:78845"/>
        <dbReference type="EC" id="2.1.1.197"/>
    </reaction>
</comment>
<comment type="pathway">
    <text evidence="1">Cofactor biosynthesis; biotin biosynthesis.</text>
</comment>
<comment type="similarity">
    <text evidence="1">Belongs to the methyltransferase superfamily.</text>
</comment>
<accession>D8MPW4</accession>
<dbReference type="EC" id="2.1.1.197" evidence="1"/>
<dbReference type="EMBL" id="FP236843">
    <property type="protein sequence ID" value="CAX58871.1"/>
    <property type="molecule type" value="Genomic_DNA"/>
</dbReference>
<dbReference type="RefSeq" id="WP_013201365.1">
    <property type="nucleotide sequence ID" value="NC_014306.1"/>
</dbReference>
<dbReference type="SMR" id="D8MPW4"/>
<dbReference type="STRING" id="634500.EbC_13400"/>
<dbReference type="GeneID" id="90511363"/>
<dbReference type="KEGG" id="ebi:EbC_13400"/>
<dbReference type="eggNOG" id="COG2226">
    <property type="taxonomic scope" value="Bacteria"/>
</dbReference>
<dbReference type="HOGENOM" id="CLU_046586_2_2_6"/>
<dbReference type="UniPathway" id="UPA00078"/>
<dbReference type="Proteomes" id="UP000008793">
    <property type="component" value="Chromosome"/>
</dbReference>
<dbReference type="GO" id="GO:0010340">
    <property type="term" value="F:carboxyl-O-methyltransferase activity"/>
    <property type="evidence" value="ECO:0007669"/>
    <property type="project" value="UniProtKB-UniRule"/>
</dbReference>
<dbReference type="GO" id="GO:0102130">
    <property type="term" value="F:malonyl-CoA methyltransferase activity"/>
    <property type="evidence" value="ECO:0007669"/>
    <property type="project" value="UniProtKB-EC"/>
</dbReference>
<dbReference type="GO" id="GO:0008757">
    <property type="term" value="F:S-adenosylmethionine-dependent methyltransferase activity"/>
    <property type="evidence" value="ECO:0007669"/>
    <property type="project" value="InterPro"/>
</dbReference>
<dbReference type="GO" id="GO:0009102">
    <property type="term" value="P:biotin biosynthetic process"/>
    <property type="evidence" value="ECO:0007669"/>
    <property type="project" value="UniProtKB-UniRule"/>
</dbReference>
<dbReference type="GO" id="GO:0032259">
    <property type="term" value="P:methylation"/>
    <property type="evidence" value="ECO:0007669"/>
    <property type="project" value="UniProtKB-KW"/>
</dbReference>
<dbReference type="CDD" id="cd02440">
    <property type="entry name" value="AdoMet_MTases"/>
    <property type="match status" value="1"/>
</dbReference>
<dbReference type="Gene3D" id="3.40.50.150">
    <property type="entry name" value="Vaccinia Virus protein VP39"/>
    <property type="match status" value="1"/>
</dbReference>
<dbReference type="HAMAP" id="MF_00835">
    <property type="entry name" value="BioC"/>
    <property type="match status" value="1"/>
</dbReference>
<dbReference type="InterPro" id="IPR011814">
    <property type="entry name" value="BioC"/>
</dbReference>
<dbReference type="InterPro" id="IPR050602">
    <property type="entry name" value="Malonyl-ACP_OMT"/>
</dbReference>
<dbReference type="InterPro" id="IPR013216">
    <property type="entry name" value="Methyltransf_11"/>
</dbReference>
<dbReference type="InterPro" id="IPR029063">
    <property type="entry name" value="SAM-dependent_MTases_sf"/>
</dbReference>
<dbReference type="NCBIfam" id="TIGR02072">
    <property type="entry name" value="BioC"/>
    <property type="match status" value="1"/>
</dbReference>
<dbReference type="PANTHER" id="PTHR13090">
    <property type="entry name" value="ARGININE-HYDROXYLASE NDUFAF5, MITOCHONDRIAL"/>
    <property type="match status" value="1"/>
</dbReference>
<dbReference type="PANTHER" id="PTHR13090:SF1">
    <property type="entry name" value="ARGININE-HYDROXYLASE NDUFAF5, MITOCHONDRIAL"/>
    <property type="match status" value="1"/>
</dbReference>
<dbReference type="Pfam" id="PF08241">
    <property type="entry name" value="Methyltransf_11"/>
    <property type="match status" value="1"/>
</dbReference>
<dbReference type="SUPFAM" id="SSF53335">
    <property type="entry name" value="S-adenosyl-L-methionine-dependent methyltransferases"/>
    <property type="match status" value="1"/>
</dbReference>
<reference key="1">
    <citation type="journal article" date="2010" name="BMC Genomics">
        <title>Genome comparison of the epiphytic bacteria Erwinia billingiae and E. tasmaniensis with the pear pathogen E. pyrifoliae.</title>
        <authorList>
            <person name="Kube M."/>
            <person name="Migdoll A.M."/>
            <person name="Gehring I."/>
            <person name="Heitmann K."/>
            <person name="Mayer Y."/>
            <person name="Kuhl H."/>
            <person name="Knaust F."/>
            <person name="Geider K."/>
            <person name="Reinhardt R."/>
        </authorList>
    </citation>
    <scope>NUCLEOTIDE SEQUENCE [LARGE SCALE GENOMIC DNA]</scope>
    <source>
        <strain>Eb661</strain>
    </source>
</reference>
<organism>
    <name type="scientific">Erwinia billingiae (strain Eb661)</name>
    <dbReference type="NCBI Taxonomy" id="634500"/>
    <lineage>
        <taxon>Bacteria</taxon>
        <taxon>Pseudomonadati</taxon>
        <taxon>Pseudomonadota</taxon>
        <taxon>Gammaproteobacteria</taxon>
        <taxon>Enterobacterales</taxon>
        <taxon>Erwiniaceae</taxon>
        <taxon>Erwinia</taxon>
    </lineage>
</organism>
<feature type="chain" id="PRO_0000412495" description="Malonyl-[acyl-carrier protein] O-methyltransferase">
    <location>
        <begin position="1"/>
        <end position="251"/>
    </location>
</feature>
<sequence length="251" mass="27725">MQTVNKQAIAQAFGRAAQSYNQHAGLQRLCGEELASYATRRQGQKVLDAGCGPGWFSQHWRAAGNHVTALDLSAEMLVQAQALHTADCYQPGDIEALPFSDASFDLCWSNLAVQWCSDLSLALTELYRVTSPGGQVLFSTLSADSLHELSAAWQPLDLPAPVNRFLPFDAIAHAGQHLPLTLMQQTLTVGFPDVLSALRSLKGIGATHLHQGRHGGLLSRRHLQQLEQHWPRDRRGYLLSYHLVYGVMHRE</sequence>
<keyword id="KW-0093">Biotin biosynthesis</keyword>
<keyword id="KW-0489">Methyltransferase</keyword>
<keyword id="KW-1185">Reference proteome</keyword>
<keyword id="KW-0949">S-adenosyl-L-methionine</keyword>
<keyword id="KW-0808">Transferase</keyword>
<evidence type="ECO:0000255" key="1">
    <source>
        <dbReference type="HAMAP-Rule" id="MF_00835"/>
    </source>
</evidence>
<proteinExistence type="inferred from homology"/>